<accession>C1C8D0</accession>
<proteinExistence type="inferred from homology"/>
<keyword id="KW-0687">Ribonucleoprotein</keyword>
<keyword id="KW-0689">Ribosomal protein</keyword>
<keyword id="KW-0694">RNA-binding</keyword>
<keyword id="KW-0699">rRNA-binding</keyword>
<sequence>MAKYEILYIIRPNIEEEAKNALVARFDSILTDNGATVVESKTWEKRRLAYEIQDFREGLYHIVNVEANDDAALKEFDRLSKINADILRHMIVKIDA</sequence>
<comment type="function">
    <text evidence="1">Binds together with bS18 to 16S ribosomal RNA.</text>
</comment>
<comment type="similarity">
    <text evidence="1">Belongs to the bacterial ribosomal protein bS6 family.</text>
</comment>
<gene>
    <name evidence="1" type="primary">rpsF</name>
    <name type="ordered locus">SP70585_1580</name>
</gene>
<name>RS6_STRP7</name>
<protein>
    <recommendedName>
        <fullName evidence="1">Small ribosomal subunit protein bS6</fullName>
    </recommendedName>
    <alternativeName>
        <fullName evidence="2">30S ribosomal protein S6</fullName>
    </alternativeName>
</protein>
<reference key="1">
    <citation type="journal article" date="2010" name="Genome Biol.">
        <title>Structure and dynamics of the pan-genome of Streptococcus pneumoniae and closely related species.</title>
        <authorList>
            <person name="Donati C."/>
            <person name="Hiller N.L."/>
            <person name="Tettelin H."/>
            <person name="Muzzi A."/>
            <person name="Croucher N.J."/>
            <person name="Angiuoli S.V."/>
            <person name="Oggioni M."/>
            <person name="Dunning Hotopp J.C."/>
            <person name="Hu F.Z."/>
            <person name="Riley D.R."/>
            <person name="Covacci A."/>
            <person name="Mitchell T.J."/>
            <person name="Bentley S.D."/>
            <person name="Kilian M."/>
            <person name="Ehrlich G.D."/>
            <person name="Rappuoli R."/>
            <person name="Moxon E.R."/>
            <person name="Masignani V."/>
        </authorList>
    </citation>
    <scope>NUCLEOTIDE SEQUENCE [LARGE SCALE GENOMIC DNA]</scope>
    <source>
        <strain>70585</strain>
    </source>
</reference>
<organism>
    <name type="scientific">Streptococcus pneumoniae (strain 70585)</name>
    <dbReference type="NCBI Taxonomy" id="488221"/>
    <lineage>
        <taxon>Bacteria</taxon>
        <taxon>Bacillati</taxon>
        <taxon>Bacillota</taxon>
        <taxon>Bacilli</taxon>
        <taxon>Lactobacillales</taxon>
        <taxon>Streptococcaceae</taxon>
        <taxon>Streptococcus</taxon>
    </lineage>
</organism>
<dbReference type="EMBL" id="CP000918">
    <property type="protein sequence ID" value="ACO16105.1"/>
    <property type="molecule type" value="Genomic_DNA"/>
</dbReference>
<dbReference type="RefSeq" id="WP_001151785.1">
    <property type="nucleotide sequence ID" value="NC_012468.1"/>
</dbReference>
<dbReference type="SMR" id="C1C8D0"/>
<dbReference type="GeneID" id="45653220"/>
<dbReference type="KEGG" id="snm:SP70585_1580"/>
<dbReference type="HOGENOM" id="CLU_113441_5_3_9"/>
<dbReference type="Proteomes" id="UP000002211">
    <property type="component" value="Chromosome"/>
</dbReference>
<dbReference type="GO" id="GO:0005737">
    <property type="term" value="C:cytoplasm"/>
    <property type="evidence" value="ECO:0007669"/>
    <property type="project" value="UniProtKB-ARBA"/>
</dbReference>
<dbReference type="GO" id="GO:1990904">
    <property type="term" value="C:ribonucleoprotein complex"/>
    <property type="evidence" value="ECO:0007669"/>
    <property type="project" value="UniProtKB-KW"/>
</dbReference>
<dbReference type="GO" id="GO:0005840">
    <property type="term" value="C:ribosome"/>
    <property type="evidence" value="ECO:0007669"/>
    <property type="project" value="UniProtKB-KW"/>
</dbReference>
<dbReference type="GO" id="GO:0070181">
    <property type="term" value="F:small ribosomal subunit rRNA binding"/>
    <property type="evidence" value="ECO:0007669"/>
    <property type="project" value="TreeGrafter"/>
</dbReference>
<dbReference type="GO" id="GO:0003735">
    <property type="term" value="F:structural constituent of ribosome"/>
    <property type="evidence" value="ECO:0007669"/>
    <property type="project" value="InterPro"/>
</dbReference>
<dbReference type="GO" id="GO:0006412">
    <property type="term" value="P:translation"/>
    <property type="evidence" value="ECO:0007669"/>
    <property type="project" value="UniProtKB-UniRule"/>
</dbReference>
<dbReference type="CDD" id="cd00473">
    <property type="entry name" value="bS6"/>
    <property type="match status" value="1"/>
</dbReference>
<dbReference type="FunFam" id="3.30.70.60:FF:000002">
    <property type="entry name" value="30S ribosomal protein S6"/>
    <property type="match status" value="1"/>
</dbReference>
<dbReference type="Gene3D" id="3.30.70.60">
    <property type="match status" value="1"/>
</dbReference>
<dbReference type="HAMAP" id="MF_00360">
    <property type="entry name" value="Ribosomal_bS6"/>
    <property type="match status" value="1"/>
</dbReference>
<dbReference type="InterPro" id="IPR000529">
    <property type="entry name" value="Ribosomal_bS6"/>
</dbReference>
<dbReference type="InterPro" id="IPR035980">
    <property type="entry name" value="Ribosomal_bS6_sf"/>
</dbReference>
<dbReference type="InterPro" id="IPR020814">
    <property type="entry name" value="Ribosomal_S6_plastid/chlpt"/>
</dbReference>
<dbReference type="InterPro" id="IPR014717">
    <property type="entry name" value="Transl_elong_EF1B/ribsomal_bS6"/>
</dbReference>
<dbReference type="NCBIfam" id="TIGR00166">
    <property type="entry name" value="S6"/>
    <property type="match status" value="1"/>
</dbReference>
<dbReference type="PANTHER" id="PTHR21011">
    <property type="entry name" value="MITOCHONDRIAL 28S RIBOSOMAL PROTEIN S6"/>
    <property type="match status" value="1"/>
</dbReference>
<dbReference type="PANTHER" id="PTHR21011:SF1">
    <property type="entry name" value="SMALL RIBOSOMAL SUBUNIT PROTEIN BS6M"/>
    <property type="match status" value="1"/>
</dbReference>
<dbReference type="Pfam" id="PF01250">
    <property type="entry name" value="Ribosomal_S6"/>
    <property type="match status" value="1"/>
</dbReference>
<dbReference type="SUPFAM" id="SSF54995">
    <property type="entry name" value="Ribosomal protein S6"/>
    <property type="match status" value="1"/>
</dbReference>
<evidence type="ECO:0000255" key="1">
    <source>
        <dbReference type="HAMAP-Rule" id="MF_00360"/>
    </source>
</evidence>
<evidence type="ECO:0000305" key="2"/>
<feature type="chain" id="PRO_1000133546" description="Small ribosomal subunit protein bS6">
    <location>
        <begin position="1"/>
        <end position="96"/>
    </location>
</feature>